<sequence length="290" mass="34071">MKYRKLIILVLSILIILPVSTLDGHHIANADDDSPKKLKYKENSALALNYHRVRKANFLNNFIYFFSSSKEIKNYSVSQSQFESQIKWLKSHDAKFLTLKEFLYYKKKGKFPKRSVWINFDDMDETIYENAYPILKKYKIPATGFIITGHVGEENFHNLDMISKKELKEMYKTGLWEFETHTHDLHNLSKNNKSKLMKASEATIIKDLNKSEKYLTKNFKKSQKTIAYPYGLMNDDKLPVIKKAGLKYGFSLEEKAVTPNSNDYYIPRILISDDAFEHLIKRWDGFHEKD</sequence>
<dbReference type="EC" id="3.5.1.-"/>
<dbReference type="EMBL" id="BA000017">
    <property type="protein sequence ID" value="BAB58830.1"/>
    <property type="molecule type" value="Genomic_DNA"/>
</dbReference>
<dbReference type="RefSeq" id="WP_000877369.1">
    <property type="nucleotide sequence ID" value="NC_002758.2"/>
</dbReference>
<dbReference type="SMR" id="Q99QX2"/>
<dbReference type="KEGG" id="sav:SAV2668"/>
<dbReference type="HOGENOM" id="CLU_030024_3_2_9"/>
<dbReference type="PhylomeDB" id="Q99QX2"/>
<dbReference type="Proteomes" id="UP000002481">
    <property type="component" value="Chromosome"/>
</dbReference>
<dbReference type="GO" id="GO:0005576">
    <property type="term" value="C:extracellular region"/>
    <property type="evidence" value="ECO:0007669"/>
    <property type="project" value="UniProtKB-KW"/>
</dbReference>
<dbReference type="GO" id="GO:0016811">
    <property type="term" value="F:hydrolase activity, acting on carbon-nitrogen (but not peptide) bonds, in linear amides"/>
    <property type="evidence" value="ECO:0007669"/>
    <property type="project" value="InterPro"/>
</dbReference>
<dbReference type="GO" id="GO:0005975">
    <property type="term" value="P:carbohydrate metabolic process"/>
    <property type="evidence" value="ECO:0007669"/>
    <property type="project" value="InterPro"/>
</dbReference>
<dbReference type="Gene3D" id="3.20.20.370">
    <property type="entry name" value="Glycoside hydrolase/deacetylase"/>
    <property type="match status" value="1"/>
</dbReference>
<dbReference type="InterPro" id="IPR011330">
    <property type="entry name" value="Glyco_hydro/deAcase_b/a-brl"/>
</dbReference>
<dbReference type="InterPro" id="IPR002509">
    <property type="entry name" value="NODB_dom"/>
</dbReference>
<dbReference type="InterPro" id="IPR023872">
    <property type="entry name" value="PNAG_deacetylase"/>
</dbReference>
<dbReference type="InterPro" id="IPR051398">
    <property type="entry name" value="Polysacch_Deacetylase"/>
</dbReference>
<dbReference type="NCBIfam" id="TIGR03933">
    <property type="entry name" value="PIA_icaB"/>
    <property type="match status" value="1"/>
</dbReference>
<dbReference type="PANTHER" id="PTHR34216">
    <property type="match status" value="1"/>
</dbReference>
<dbReference type="PANTHER" id="PTHR34216:SF3">
    <property type="entry name" value="POLY-BETA-1,6-N-ACETYL-D-GLUCOSAMINE N-DEACETYLASE"/>
    <property type="match status" value="1"/>
</dbReference>
<dbReference type="Pfam" id="PF01522">
    <property type="entry name" value="Polysacc_deac_1"/>
    <property type="match status" value="1"/>
</dbReference>
<dbReference type="SUPFAM" id="SSF88713">
    <property type="entry name" value="Glycoside hydrolase/deacetylase"/>
    <property type="match status" value="1"/>
</dbReference>
<dbReference type="PROSITE" id="PS51677">
    <property type="entry name" value="NODB"/>
    <property type="match status" value="1"/>
</dbReference>
<proteinExistence type="inferred from homology"/>
<feature type="signal peptide" evidence="2">
    <location>
        <begin position="1"/>
        <end position="28"/>
    </location>
</feature>
<feature type="chain" id="PRO_0000024835" description="Poly-beta-1,6-N-acetyl-D-glucosamine N-deacetylase">
    <location>
        <begin position="29"/>
        <end position="290"/>
    </location>
</feature>
<feature type="domain" description="NodB homology" evidence="3">
    <location>
        <begin position="114"/>
        <end position="290"/>
    </location>
</feature>
<organism>
    <name type="scientific">Staphylococcus aureus (strain Mu50 / ATCC 700699)</name>
    <dbReference type="NCBI Taxonomy" id="158878"/>
    <lineage>
        <taxon>Bacteria</taxon>
        <taxon>Bacillati</taxon>
        <taxon>Bacillota</taxon>
        <taxon>Bacilli</taxon>
        <taxon>Bacillales</taxon>
        <taxon>Staphylococcaceae</taxon>
        <taxon>Staphylococcus</taxon>
    </lineage>
</organism>
<accession>Q99QX2</accession>
<comment type="function">
    <text evidence="1">Catalyzes the N-deacetylation of poly-beta-1,6-N-acetyl-D-glucosamine (PNAG, also referred to as PIA), a biofilm adhesin polysaccharide. N-deacetylation is crucial for attachment of the polysaccharide to the bacterial cell surface; it leads to the introduction of positive charges in the otherwise neutral PIA polymer, allowing electrostatic interactions (By similarity).</text>
</comment>
<comment type="subcellular location">
    <subcellularLocation>
        <location>Secreted</location>
        <location>Cell wall</location>
    </subcellularLocation>
    <text evidence="1">Attached to the cell surface.</text>
</comment>
<comment type="similarity">
    <text evidence="4">Belongs to the polysaccharide deacetylase family.</text>
</comment>
<protein>
    <recommendedName>
        <fullName>Poly-beta-1,6-N-acetyl-D-glucosamine N-deacetylase</fullName>
        <shortName>PNAG N-deacetylase</shortName>
        <shortName>Poly-beta-1,6-GlcNAc N-deacetylase</shortName>
        <ecNumber>3.5.1.-</ecNumber>
    </recommendedName>
    <alternativeName>
        <fullName>Biofilm polysaccharide intercellular adhesin deacetylase</fullName>
        <shortName>Biofilm PIA deacetylase</shortName>
    </alternativeName>
    <alternativeName>
        <fullName>Intercellular adhesion protein B</fullName>
    </alternativeName>
</protein>
<evidence type="ECO:0000250" key="1"/>
<evidence type="ECO:0000255" key="2"/>
<evidence type="ECO:0000255" key="3">
    <source>
        <dbReference type="PROSITE-ProRule" id="PRU01014"/>
    </source>
</evidence>
<evidence type="ECO:0000305" key="4"/>
<keyword id="KW-0134">Cell wall</keyword>
<keyword id="KW-0378">Hydrolase</keyword>
<keyword id="KW-0964">Secreted</keyword>
<keyword id="KW-0732">Signal</keyword>
<name>ICAB_STAAM</name>
<reference key="1">
    <citation type="journal article" date="2001" name="Lancet">
        <title>Whole genome sequencing of meticillin-resistant Staphylococcus aureus.</title>
        <authorList>
            <person name="Kuroda M."/>
            <person name="Ohta T."/>
            <person name="Uchiyama I."/>
            <person name="Baba T."/>
            <person name="Yuzawa H."/>
            <person name="Kobayashi I."/>
            <person name="Cui L."/>
            <person name="Oguchi A."/>
            <person name="Aoki K."/>
            <person name="Nagai Y."/>
            <person name="Lian J.-Q."/>
            <person name="Ito T."/>
            <person name="Kanamori M."/>
            <person name="Matsumaru H."/>
            <person name="Maruyama A."/>
            <person name="Murakami H."/>
            <person name="Hosoyama A."/>
            <person name="Mizutani-Ui Y."/>
            <person name="Takahashi N.K."/>
            <person name="Sawano T."/>
            <person name="Inoue R."/>
            <person name="Kaito C."/>
            <person name="Sekimizu K."/>
            <person name="Hirakawa H."/>
            <person name="Kuhara S."/>
            <person name="Goto S."/>
            <person name="Yabuzaki J."/>
            <person name="Kanehisa M."/>
            <person name="Yamashita A."/>
            <person name="Oshima K."/>
            <person name="Furuya K."/>
            <person name="Yoshino C."/>
            <person name="Shiba T."/>
            <person name="Hattori M."/>
            <person name="Ogasawara N."/>
            <person name="Hayashi H."/>
            <person name="Hiramatsu K."/>
        </authorList>
    </citation>
    <scope>NUCLEOTIDE SEQUENCE [LARGE SCALE GENOMIC DNA]</scope>
    <source>
        <strain>Mu50 / ATCC 700699</strain>
    </source>
</reference>
<gene>
    <name type="primary">icaB</name>
    <name type="ordered locus">SAV2668</name>
</gene>